<reference key="1">
    <citation type="journal article" date="2006" name="Nat. Biotechnol.">
        <title>Complete genome of the mutualistic, N2-fixing grass endophyte Azoarcus sp. strain BH72.</title>
        <authorList>
            <person name="Krause A."/>
            <person name="Ramakumar A."/>
            <person name="Bartels D."/>
            <person name="Battistoni F."/>
            <person name="Bekel T."/>
            <person name="Boch J."/>
            <person name="Boehm M."/>
            <person name="Friedrich F."/>
            <person name="Hurek T."/>
            <person name="Krause L."/>
            <person name="Linke B."/>
            <person name="McHardy A.C."/>
            <person name="Sarkar A."/>
            <person name="Schneiker S."/>
            <person name="Syed A.A."/>
            <person name="Thauer R."/>
            <person name="Vorhoelter F.-J."/>
            <person name="Weidner S."/>
            <person name="Puehler A."/>
            <person name="Reinhold-Hurek B."/>
            <person name="Kaiser O."/>
            <person name="Goesmann A."/>
        </authorList>
    </citation>
    <scope>NUCLEOTIDE SEQUENCE [LARGE SCALE GENOMIC DNA]</scope>
    <source>
        <strain>BH72</strain>
    </source>
</reference>
<protein>
    <recommendedName>
        <fullName evidence="1">UPF0145 protein azo0572</fullName>
    </recommendedName>
</protein>
<keyword id="KW-1185">Reference proteome</keyword>
<organism>
    <name type="scientific">Azoarcus sp. (strain BH72)</name>
    <dbReference type="NCBI Taxonomy" id="418699"/>
    <lineage>
        <taxon>Bacteria</taxon>
        <taxon>Pseudomonadati</taxon>
        <taxon>Pseudomonadota</taxon>
        <taxon>Betaproteobacteria</taxon>
        <taxon>Rhodocyclales</taxon>
        <taxon>Zoogloeaceae</taxon>
        <taxon>Azoarcus</taxon>
    </lineage>
</organism>
<name>Y572_AZOSB</name>
<sequence>MLMTTTPTLEGKPVQQYLGVVTGEAIIGANIFKDLFASIRNIVGGRAGAYERSLADAREVAMAEMAEQALKLGANAVIGIDIDYEVLGQDNGMLMVCVSGTAVITA</sequence>
<dbReference type="EMBL" id="AM406670">
    <property type="protein sequence ID" value="CAL93189.1"/>
    <property type="molecule type" value="Genomic_DNA"/>
</dbReference>
<dbReference type="RefSeq" id="WP_011764307.1">
    <property type="nucleotide sequence ID" value="NC_008702.1"/>
</dbReference>
<dbReference type="SMR" id="A1K2Y4"/>
<dbReference type="STRING" id="62928.azo0572"/>
<dbReference type="KEGG" id="aoa:dqs_0642"/>
<dbReference type="KEGG" id="azo:azo0572"/>
<dbReference type="eggNOG" id="COG0393">
    <property type="taxonomic scope" value="Bacteria"/>
</dbReference>
<dbReference type="HOGENOM" id="CLU_117144_3_2_4"/>
<dbReference type="OrthoDB" id="9796448at2"/>
<dbReference type="Proteomes" id="UP000002588">
    <property type="component" value="Chromosome"/>
</dbReference>
<dbReference type="Gene3D" id="3.30.110.70">
    <property type="entry name" value="Hypothetical protein apc22750. Chain B"/>
    <property type="match status" value="1"/>
</dbReference>
<dbReference type="HAMAP" id="MF_00338">
    <property type="entry name" value="UPF0145"/>
    <property type="match status" value="1"/>
</dbReference>
<dbReference type="InterPro" id="IPR035439">
    <property type="entry name" value="UPF0145_dom_sf"/>
</dbReference>
<dbReference type="InterPro" id="IPR002765">
    <property type="entry name" value="UPF0145_YbjQ-like"/>
</dbReference>
<dbReference type="NCBIfam" id="NF002776">
    <property type="entry name" value="PRK02877.1"/>
    <property type="match status" value="1"/>
</dbReference>
<dbReference type="PANTHER" id="PTHR34068">
    <property type="entry name" value="UPF0145 PROTEIN YBJQ"/>
    <property type="match status" value="1"/>
</dbReference>
<dbReference type="PANTHER" id="PTHR34068:SF1">
    <property type="entry name" value="UPF0145 PROTEIN YBJQ"/>
    <property type="match status" value="1"/>
</dbReference>
<dbReference type="Pfam" id="PF01906">
    <property type="entry name" value="YbjQ_1"/>
    <property type="match status" value="1"/>
</dbReference>
<dbReference type="SUPFAM" id="SSF117782">
    <property type="entry name" value="YbjQ-like"/>
    <property type="match status" value="1"/>
</dbReference>
<gene>
    <name type="ordered locus">azo0572</name>
</gene>
<proteinExistence type="inferred from homology"/>
<comment type="similarity">
    <text evidence="1">Belongs to the UPF0145 family.</text>
</comment>
<accession>A1K2Y4</accession>
<feature type="chain" id="PRO_1000012975" description="UPF0145 protein azo0572">
    <location>
        <begin position="1"/>
        <end position="106"/>
    </location>
</feature>
<evidence type="ECO:0000255" key="1">
    <source>
        <dbReference type="HAMAP-Rule" id="MF_00338"/>
    </source>
</evidence>